<gene>
    <name evidence="1" type="primary">coaD</name>
    <name type="ordered locus">FTN_0754</name>
</gene>
<accession>A0Q5Y0</accession>
<keyword id="KW-0067">ATP-binding</keyword>
<keyword id="KW-0173">Coenzyme A biosynthesis</keyword>
<keyword id="KW-0963">Cytoplasm</keyword>
<keyword id="KW-0460">Magnesium</keyword>
<keyword id="KW-0547">Nucleotide-binding</keyword>
<keyword id="KW-0548">Nucleotidyltransferase</keyword>
<keyword id="KW-0808">Transferase</keyword>
<organism>
    <name type="scientific">Francisella tularensis subsp. novicida (strain U112)</name>
    <dbReference type="NCBI Taxonomy" id="401614"/>
    <lineage>
        <taxon>Bacteria</taxon>
        <taxon>Pseudomonadati</taxon>
        <taxon>Pseudomonadota</taxon>
        <taxon>Gammaproteobacteria</taxon>
        <taxon>Thiotrichales</taxon>
        <taxon>Francisellaceae</taxon>
        <taxon>Francisella</taxon>
    </lineage>
</organism>
<comment type="function">
    <text evidence="1">Reversibly transfers an adenylyl group from ATP to 4'-phosphopantetheine, yielding dephospho-CoA (dPCoA) and pyrophosphate.</text>
</comment>
<comment type="catalytic activity">
    <reaction evidence="1">
        <text>(R)-4'-phosphopantetheine + ATP + H(+) = 3'-dephospho-CoA + diphosphate</text>
        <dbReference type="Rhea" id="RHEA:19801"/>
        <dbReference type="ChEBI" id="CHEBI:15378"/>
        <dbReference type="ChEBI" id="CHEBI:30616"/>
        <dbReference type="ChEBI" id="CHEBI:33019"/>
        <dbReference type="ChEBI" id="CHEBI:57328"/>
        <dbReference type="ChEBI" id="CHEBI:61723"/>
        <dbReference type="EC" id="2.7.7.3"/>
    </reaction>
</comment>
<comment type="cofactor">
    <cofactor evidence="1">
        <name>Mg(2+)</name>
        <dbReference type="ChEBI" id="CHEBI:18420"/>
    </cofactor>
</comment>
<comment type="pathway">
    <text evidence="1">Cofactor biosynthesis; coenzyme A biosynthesis; CoA from (R)-pantothenate: step 4/5.</text>
</comment>
<comment type="subunit">
    <text evidence="1">Homohexamer.</text>
</comment>
<comment type="subcellular location">
    <subcellularLocation>
        <location evidence="1">Cytoplasm</location>
    </subcellularLocation>
</comment>
<comment type="similarity">
    <text evidence="1">Belongs to the bacterial CoaD family.</text>
</comment>
<feature type="chain" id="PRO_1000011147" description="Phosphopantetheine adenylyltransferase">
    <location>
        <begin position="1"/>
        <end position="162"/>
    </location>
</feature>
<feature type="binding site" evidence="1">
    <location>
        <begin position="10"/>
        <end position="11"/>
    </location>
    <ligand>
        <name>ATP</name>
        <dbReference type="ChEBI" id="CHEBI:30616"/>
    </ligand>
</feature>
<feature type="binding site" evidence="1">
    <location>
        <position position="10"/>
    </location>
    <ligand>
        <name>substrate</name>
    </ligand>
</feature>
<feature type="binding site" evidence="1">
    <location>
        <position position="18"/>
    </location>
    <ligand>
        <name>ATP</name>
        <dbReference type="ChEBI" id="CHEBI:30616"/>
    </ligand>
</feature>
<feature type="binding site" evidence="1">
    <location>
        <position position="42"/>
    </location>
    <ligand>
        <name>substrate</name>
    </ligand>
</feature>
<feature type="binding site" evidence="1">
    <location>
        <position position="74"/>
    </location>
    <ligand>
        <name>substrate</name>
    </ligand>
</feature>
<feature type="binding site" evidence="1">
    <location>
        <position position="88"/>
    </location>
    <ligand>
        <name>substrate</name>
    </ligand>
</feature>
<feature type="binding site" evidence="1">
    <location>
        <begin position="89"/>
        <end position="91"/>
    </location>
    <ligand>
        <name>ATP</name>
        <dbReference type="ChEBI" id="CHEBI:30616"/>
    </ligand>
</feature>
<feature type="binding site" evidence="1">
    <location>
        <position position="99"/>
    </location>
    <ligand>
        <name>ATP</name>
        <dbReference type="ChEBI" id="CHEBI:30616"/>
    </ligand>
</feature>
<feature type="binding site" evidence="1">
    <location>
        <begin position="124"/>
        <end position="130"/>
    </location>
    <ligand>
        <name>ATP</name>
        <dbReference type="ChEBI" id="CHEBI:30616"/>
    </ligand>
</feature>
<feature type="site" description="Transition state stabilizer" evidence="1">
    <location>
        <position position="18"/>
    </location>
</feature>
<proteinExistence type="inferred from homology"/>
<reference key="1">
    <citation type="journal article" date="2007" name="Genome Biol.">
        <title>Comparison of Francisella tularensis genomes reveals evolutionary events associated with the emergence of human pathogenic strains.</title>
        <authorList>
            <person name="Rohmer L."/>
            <person name="Fong C."/>
            <person name="Abmayr S."/>
            <person name="Wasnick M."/>
            <person name="Larson Freeman T.J."/>
            <person name="Radey M."/>
            <person name="Guina T."/>
            <person name="Svensson K."/>
            <person name="Hayden H.S."/>
            <person name="Jacobs M."/>
            <person name="Gallagher L.A."/>
            <person name="Manoil C."/>
            <person name="Ernst R.K."/>
            <person name="Drees B."/>
            <person name="Buckley D."/>
            <person name="Haugen E."/>
            <person name="Bovee D."/>
            <person name="Zhou Y."/>
            <person name="Chang J."/>
            <person name="Levy R."/>
            <person name="Lim R."/>
            <person name="Gillett W."/>
            <person name="Guenthener D."/>
            <person name="Kang A."/>
            <person name="Shaffer S.A."/>
            <person name="Taylor G."/>
            <person name="Chen J."/>
            <person name="Gallis B."/>
            <person name="D'Argenio D.A."/>
            <person name="Forsman M."/>
            <person name="Olson M.V."/>
            <person name="Goodlett D.R."/>
            <person name="Kaul R."/>
            <person name="Miller S.I."/>
            <person name="Brittnacher M.J."/>
        </authorList>
    </citation>
    <scope>NUCLEOTIDE SEQUENCE [LARGE SCALE GENOMIC DNA]</scope>
    <source>
        <strain>U112</strain>
    </source>
</reference>
<name>COAD_FRATN</name>
<dbReference type="EC" id="2.7.7.3" evidence="1"/>
<dbReference type="EMBL" id="CP000439">
    <property type="protein sequence ID" value="ABK89645.1"/>
    <property type="molecule type" value="Genomic_DNA"/>
</dbReference>
<dbReference type="RefSeq" id="WP_003016535.1">
    <property type="nucleotide sequence ID" value="NZ_CP009633.1"/>
</dbReference>
<dbReference type="SMR" id="A0Q5Y0"/>
<dbReference type="KEGG" id="ftn:FTN_0754"/>
<dbReference type="KEGG" id="ftx:AW25_1267"/>
<dbReference type="BioCyc" id="FTUL401614:G1G75-786-MONOMER"/>
<dbReference type="UniPathway" id="UPA00241">
    <property type="reaction ID" value="UER00355"/>
</dbReference>
<dbReference type="Proteomes" id="UP000000762">
    <property type="component" value="Chromosome"/>
</dbReference>
<dbReference type="GO" id="GO:0005737">
    <property type="term" value="C:cytoplasm"/>
    <property type="evidence" value="ECO:0007669"/>
    <property type="project" value="UniProtKB-SubCell"/>
</dbReference>
<dbReference type="GO" id="GO:0005524">
    <property type="term" value="F:ATP binding"/>
    <property type="evidence" value="ECO:0007669"/>
    <property type="project" value="UniProtKB-KW"/>
</dbReference>
<dbReference type="GO" id="GO:0004595">
    <property type="term" value="F:pantetheine-phosphate adenylyltransferase activity"/>
    <property type="evidence" value="ECO:0007669"/>
    <property type="project" value="UniProtKB-UniRule"/>
</dbReference>
<dbReference type="GO" id="GO:0015937">
    <property type="term" value="P:coenzyme A biosynthetic process"/>
    <property type="evidence" value="ECO:0007669"/>
    <property type="project" value="UniProtKB-UniRule"/>
</dbReference>
<dbReference type="CDD" id="cd02163">
    <property type="entry name" value="PPAT"/>
    <property type="match status" value="1"/>
</dbReference>
<dbReference type="Gene3D" id="3.40.50.620">
    <property type="entry name" value="HUPs"/>
    <property type="match status" value="1"/>
</dbReference>
<dbReference type="HAMAP" id="MF_00151">
    <property type="entry name" value="PPAT_bact"/>
    <property type="match status" value="1"/>
</dbReference>
<dbReference type="InterPro" id="IPR004821">
    <property type="entry name" value="Cyt_trans-like"/>
</dbReference>
<dbReference type="InterPro" id="IPR001980">
    <property type="entry name" value="PPAT"/>
</dbReference>
<dbReference type="InterPro" id="IPR014729">
    <property type="entry name" value="Rossmann-like_a/b/a_fold"/>
</dbReference>
<dbReference type="NCBIfam" id="TIGR01510">
    <property type="entry name" value="coaD_prev_kdtB"/>
    <property type="match status" value="1"/>
</dbReference>
<dbReference type="NCBIfam" id="TIGR00125">
    <property type="entry name" value="cyt_tran_rel"/>
    <property type="match status" value="1"/>
</dbReference>
<dbReference type="PANTHER" id="PTHR21342">
    <property type="entry name" value="PHOSPHOPANTETHEINE ADENYLYLTRANSFERASE"/>
    <property type="match status" value="1"/>
</dbReference>
<dbReference type="PANTHER" id="PTHR21342:SF1">
    <property type="entry name" value="PHOSPHOPANTETHEINE ADENYLYLTRANSFERASE"/>
    <property type="match status" value="1"/>
</dbReference>
<dbReference type="Pfam" id="PF01467">
    <property type="entry name" value="CTP_transf_like"/>
    <property type="match status" value="1"/>
</dbReference>
<dbReference type="PRINTS" id="PR01020">
    <property type="entry name" value="LPSBIOSNTHSS"/>
</dbReference>
<dbReference type="SUPFAM" id="SSF52374">
    <property type="entry name" value="Nucleotidylyl transferase"/>
    <property type="match status" value="1"/>
</dbReference>
<sequence length="162" mass="18517">MNKIAIYPGTFDPITNGHVDLVERALNIFDEIVVAVSTAYGKNTLFDIRIREQMIKEVFKDNQRVKVVSFQGLLVDTAVKHNACAIVRGLRAVSDFDYEFQMSSMNNKLNSDIQTIFLTPSEKFSCISSTLVRAVAIHNYKRVDEFVPECVFREIKLKYSKE</sequence>
<evidence type="ECO:0000255" key="1">
    <source>
        <dbReference type="HAMAP-Rule" id="MF_00151"/>
    </source>
</evidence>
<protein>
    <recommendedName>
        <fullName evidence="1">Phosphopantetheine adenylyltransferase</fullName>
        <ecNumber evidence="1">2.7.7.3</ecNumber>
    </recommendedName>
    <alternativeName>
        <fullName evidence="1">Dephospho-CoA pyrophosphorylase</fullName>
    </alternativeName>
    <alternativeName>
        <fullName evidence="1">Pantetheine-phosphate adenylyltransferase</fullName>
        <shortName evidence="1">PPAT</shortName>
    </alternativeName>
</protein>